<protein>
    <recommendedName>
        <fullName evidence="1">Small ribosomal subunit protein uS19</fullName>
    </recommendedName>
    <alternativeName>
        <fullName evidence="2">30S ribosomal protein S19</fullName>
    </alternativeName>
</protein>
<accession>Q211F2</accession>
<gene>
    <name evidence="1" type="primary">rpsS</name>
    <name type="ordered locus">RPC_3444</name>
</gene>
<dbReference type="EMBL" id="CP000301">
    <property type="protein sequence ID" value="ABD88984.1"/>
    <property type="molecule type" value="Genomic_DNA"/>
</dbReference>
<dbReference type="SMR" id="Q211F2"/>
<dbReference type="STRING" id="316056.RPC_3444"/>
<dbReference type="KEGG" id="rpc:RPC_3444"/>
<dbReference type="eggNOG" id="COG0185">
    <property type="taxonomic scope" value="Bacteria"/>
</dbReference>
<dbReference type="HOGENOM" id="CLU_144911_0_1_5"/>
<dbReference type="OrthoDB" id="9797833at2"/>
<dbReference type="GO" id="GO:0005737">
    <property type="term" value="C:cytoplasm"/>
    <property type="evidence" value="ECO:0007669"/>
    <property type="project" value="UniProtKB-ARBA"/>
</dbReference>
<dbReference type="GO" id="GO:0015935">
    <property type="term" value="C:small ribosomal subunit"/>
    <property type="evidence" value="ECO:0007669"/>
    <property type="project" value="InterPro"/>
</dbReference>
<dbReference type="GO" id="GO:0019843">
    <property type="term" value="F:rRNA binding"/>
    <property type="evidence" value="ECO:0007669"/>
    <property type="project" value="UniProtKB-UniRule"/>
</dbReference>
<dbReference type="GO" id="GO:0003735">
    <property type="term" value="F:structural constituent of ribosome"/>
    <property type="evidence" value="ECO:0007669"/>
    <property type="project" value="InterPro"/>
</dbReference>
<dbReference type="GO" id="GO:0000028">
    <property type="term" value="P:ribosomal small subunit assembly"/>
    <property type="evidence" value="ECO:0007669"/>
    <property type="project" value="TreeGrafter"/>
</dbReference>
<dbReference type="GO" id="GO:0006412">
    <property type="term" value="P:translation"/>
    <property type="evidence" value="ECO:0007669"/>
    <property type="project" value="UniProtKB-UniRule"/>
</dbReference>
<dbReference type="FunFam" id="3.30.860.10:FF:000001">
    <property type="entry name" value="30S ribosomal protein S19"/>
    <property type="match status" value="1"/>
</dbReference>
<dbReference type="Gene3D" id="3.30.860.10">
    <property type="entry name" value="30s Ribosomal Protein S19, Chain A"/>
    <property type="match status" value="1"/>
</dbReference>
<dbReference type="HAMAP" id="MF_00531">
    <property type="entry name" value="Ribosomal_uS19"/>
    <property type="match status" value="1"/>
</dbReference>
<dbReference type="InterPro" id="IPR002222">
    <property type="entry name" value="Ribosomal_uS19"/>
</dbReference>
<dbReference type="InterPro" id="IPR005732">
    <property type="entry name" value="Ribosomal_uS19_bac-type"/>
</dbReference>
<dbReference type="InterPro" id="IPR020934">
    <property type="entry name" value="Ribosomal_uS19_CS"/>
</dbReference>
<dbReference type="InterPro" id="IPR023575">
    <property type="entry name" value="Ribosomal_uS19_SF"/>
</dbReference>
<dbReference type="NCBIfam" id="TIGR01050">
    <property type="entry name" value="rpsS_bact"/>
    <property type="match status" value="1"/>
</dbReference>
<dbReference type="PANTHER" id="PTHR11880">
    <property type="entry name" value="RIBOSOMAL PROTEIN S19P FAMILY MEMBER"/>
    <property type="match status" value="1"/>
</dbReference>
<dbReference type="PANTHER" id="PTHR11880:SF8">
    <property type="entry name" value="SMALL RIBOSOMAL SUBUNIT PROTEIN US19M"/>
    <property type="match status" value="1"/>
</dbReference>
<dbReference type="Pfam" id="PF00203">
    <property type="entry name" value="Ribosomal_S19"/>
    <property type="match status" value="1"/>
</dbReference>
<dbReference type="PIRSF" id="PIRSF002144">
    <property type="entry name" value="Ribosomal_S19"/>
    <property type="match status" value="1"/>
</dbReference>
<dbReference type="PRINTS" id="PR00975">
    <property type="entry name" value="RIBOSOMALS19"/>
</dbReference>
<dbReference type="SUPFAM" id="SSF54570">
    <property type="entry name" value="Ribosomal protein S19"/>
    <property type="match status" value="1"/>
</dbReference>
<dbReference type="PROSITE" id="PS00323">
    <property type="entry name" value="RIBOSOMAL_S19"/>
    <property type="match status" value="1"/>
</dbReference>
<comment type="function">
    <text evidence="1">Protein S19 forms a complex with S13 that binds strongly to the 16S ribosomal RNA.</text>
</comment>
<comment type="similarity">
    <text evidence="1">Belongs to the universal ribosomal protein uS19 family.</text>
</comment>
<proteinExistence type="inferred from homology"/>
<name>RS19_RHOPB</name>
<reference key="1">
    <citation type="submission" date="2006-03" db="EMBL/GenBank/DDBJ databases">
        <title>Complete sequence of Rhodopseudomonas palustris BisB18.</title>
        <authorList>
            <consortium name="US DOE Joint Genome Institute"/>
            <person name="Copeland A."/>
            <person name="Lucas S."/>
            <person name="Lapidus A."/>
            <person name="Barry K."/>
            <person name="Detter J.C."/>
            <person name="Glavina del Rio T."/>
            <person name="Hammon N."/>
            <person name="Israni S."/>
            <person name="Dalin E."/>
            <person name="Tice H."/>
            <person name="Pitluck S."/>
            <person name="Chain P."/>
            <person name="Malfatti S."/>
            <person name="Shin M."/>
            <person name="Vergez L."/>
            <person name="Schmutz J."/>
            <person name="Larimer F."/>
            <person name="Land M."/>
            <person name="Hauser L."/>
            <person name="Pelletier D.A."/>
            <person name="Kyrpides N."/>
            <person name="Anderson I."/>
            <person name="Oda Y."/>
            <person name="Harwood C.S."/>
            <person name="Richardson P."/>
        </authorList>
    </citation>
    <scope>NUCLEOTIDE SEQUENCE [LARGE SCALE GENOMIC DNA]</scope>
    <source>
        <strain>BisB18</strain>
    </source>
</reference>
<evidence type="ECO:0000255" key="1">
    <source>
        <dbReference type="HAMAP-Rule" id="MF_00531"/>
    </source>
</evidence>
<evidence type="ECO:0000305" key="2"/>
<keyword id="KW-0687">Ribonucleoprotein</keyword>
<keyword id="KW-0689">Ribosomal protein</keyword>
<keyword id="KW-0694">RNA-binding</keyword>
<keyword id="KW-0699">rRNA-binding</keyword>
<organism>
    <name type="scientific">Rhodopseudomonas palustris (strain BisB18)</name>
    <dbReference type="NCBI Taxonomy" id="316056"/>
    <lineage>
        <taxon>Bacteria</taxon>
        <taxon>Pseudomonadati</taxon>
        <taxon>Pseudomonadota</taxon>
        <taxon>Alphaproteobacteria</taxon>
        <taxon>Hyphomicrobiales</taxon>
        <taxon>Nitrobacteraceae</taxon>
        <taxon>Rhodopseudomonas</taxon>
    </lineage>
</organism>
<feature type="chain" id="PRO_0000265415" description="Small ribosomal subunit protein uS19">
    <location>
        <begin position="1"/>
        <end position="92"/>
    </location>
</feature>
<sequence length="92" mass="10262">MVRSVWKGPFVEGSLLKKADVARSSGRHDVIKIWSRRSTILPQFVGLVFGVYNGQKHVPVSVNEEMVGHKFGEFSPTRTFHGHSGDKKAKKA</sequence>